<dbReference type="EC" id="3.6.4.-" evidence="5"/>
<dbReference type="EMBL" id="J00068">
    <property type="protein sequence ID" value="AAB59376.1"/>
    <property type="molecule type" value="mRNA"/>
</dbReference>
<dbReference type="EMBL" id="M20543">
    <property type="protein sequence ID" value="AAA60296.1"/>
    <property type="molecule type" value="Genomic_DNA"/>
</dbReference>
<dbReference type="EMBL" id="AF182035">
    <property type="protein sequence ID" value="AAF02694.1"/>
    <property type="molecule type" value="Genomic_DNA"/>
</dbReference>
<dbReference type="EMBL" id="CR536516">
    <property type="protein sequence ID" value="CAG38754.1"/>
    <property type="molecule type" value="mRNA"/>
</dbReference>
<dbReference type="EMBL" id="CR541796">
    <property type="protein sequence ID" value="CAG46595.1"/>
    <property type="molecule type" value="mRNA"/>
</dbReference>
<dbReference type="EMBL" id="AL160004">
    <property type="status" value="NOT_ANNOTATED_CDS"/>
    <property type="molecule type" value="Genomic_DNA"/>
</dbReference>
<dbReference type="EMBL" id="CH471098">
    <property type="protein sequence ID" value="EAW69898.1"/>
    <property type="molecule type" value="Genomic_DNA"/>
</dbReference>
<dbReference type="EMBL" id="BC012597">
    <property type="protein sequence ID" value="AAH12597.1"/>
    <property type="molecule type" value="mRNA"/>
</dbReference>
<dbReference type="CCDS" id="CCDS1578.1"/>
<dbReference type="PIR" id="A31251">
    <property type="entry name" value="ATHU"/>
</dbReference>
<dbReference type="RefSeq" id="NP_001091.1">
    <property type="nucleotide sequence ID" value="NM_001100.4"/>
</dbReference>
<dbReference type="PDB" id="7RNS">
    <property type="method" value="X-ray"/>
    <property type="resolution" value="1.14 A"/>
    <property type="chains" value="B=52-60"/>
</dbReference>
<dbReference type="PDB" id="7RNU">
    <property type="method" value="X-ray"/>
    <property type="resolution" value="1.45 A"/>
    <property type="chains" value="B/D/F/H=52-60"/>
</dbReference>
<dbReference type="PDB" id="7RNV">
    <property type="method" value="X-ray"/>
    <property type="resolution" value="2.15 A"/>
    <property type="chains" value="B=52-60"/>
</dbReference>
<dbReference type="PDB" id="9DUU">
    <property type="method" value="EM"/>
    <property type="resolution" value="3.40 A"/>
    <property type="chains" value="A/B/C/D/E/F=3-377"/>
</dbReference>
<dbReference type="PDB" id="9DUV">
    <property type="method" value="EM"/>
    <property type="resolution" value="3.30 A"/>
    <property type="chains" value="A/B/C/D/E/F=3-377"/>
</dbReference>
<dbReference type="PDBsum" id="7RNS"/>
<dbReference type="PDBsum" id="7RNU"/>
<dbReference type="PDBsum" id="7RNV"/>
<dbReference type="PDBsum" id="9DUU"/>
<dbReference type="PDBsum" id="9DUV"/>
<dbReference type="EMDB" id="EMD-47179"/>
<dbReference type="EMDB" id="EMD-47180"/>
<dbReference type="SMR" id="P68133"/>
<dbReference type="BioGRID" id="106573">
    <property type="interactions" value="311"/>
</dbReference>
<dbReference type="FunCoup" id="P68133">
    <property type="interactions" value="572"/>
</dbReference>
<dbReference type="IntAct" id="P68133">
    <property type="interactions" value="96"/>
</dbReference>
<dbReference type="MINT" id="P68133"/>
<dbReference type="STRING" id="9606.ENSP00000355645"/>
<dbReference type="DrugBank" id="DB04151">
    <property type="generic name" value="1-Methylhistidine"/>
</dbReference>
<dbReference type="DrugBank" id="DB04629">
    <property type="generic name" value="Aplyronine A"/>
</dbReference>
<dbReference type="DrugBank" id="DB03850">
    <property type="generic name" value="Jaspisamide A"/>
</dbReference>
<dbReference type="DrugBank" id="DB03616">
    <property type="generic name" value="Kabiramide C"/>
</dbReference>
<dbReference type="DrugBank" id="DB02621">
    <property type="generic name" value="Latrunculin A"/>
</dbReference>
<dbReference type="DrugBank" id="DB08080">
    <property type="generic name" value="Latrunculin B"/>
</dbReference>
<dbReference type="DrugBank" id="DB04395">
    <property type="generic name" value="Phosphoaminophosphonic Acid-Adenylate Ester"/>
</dbReference>
<dbReference type="DrugBank" id="DB04774">
    <property type="generic name" value="Reidispongiolide A"/>
</dbReference>
<dbReference type="DrugBank" id="DB04775">
    <property type="generic name" value="Reidispongiolide C"/>
</dbReference>
<dbReference type="DrugBank" id="DB04783">
    <property type="generic name" value="Sphinxolide B"/>
</dbReference>
<dbReference type="DrugBank" id="DB02772">
    <property type="generic name" value="Sucrose"/>
</dbReference>
<dbReference type="DrugBank" id="DB03903">
    <property type="generic name" value="Tmr"/>
</dbReference>
<dbReference type="DrugBank" id="DB03021">
    <property type="generic name" value="Ulapualide A"/>
</dbReference>
<dbReference type="GlyCosmos" id="P68133">
    <property type="glycosylation" value="4 sites, 1 glycan"/>
</dbReference>
<dbReference type="GlyGen" id="P68133">
    <property type="glycosylation" value="4 sites, 1 O-linked glycan (4 sites)"/>
</dbReference>
<dbReference type="iPTMnet" id="P68133"/>
<dbReference type="MetOSite" id="P68133"/>
<dbReference type="PhosphoSitePlus" id="P68133"/>
<dbReference type="SwissPalm" id="P68133"/>
<dbReference type="BioMuta" id="ACTA1"/>
<dbReference type="DMDM" id="61218043"/>
<dbReference type="CPTAC" id="CPTAC-5857"/>
<dbReference type="CPTAC" id="CPTAC-5882"/>
<dbReference type="jPOST" id="P68133"/>
<dbReference type="MassIVE" id="P68133"/>
<dbReference type="PaxDb" id="9606-ENSP00000355645"/>
<dbReference type="PeptideAtlas" id="P68133"/>
<dbReference type="PRIDE" id="P68133"/>
<dbReference type="ProteomicsDB" id="57532"/>
<dbReference type="Pumba" id="P68133"/>
<dbReference type="Antibodypedia" id="3508">
    <property type="antibodies" value="1328 antibodies from 46 providers"/>
</dbReference>
<dbReference type="DNASU" id="58"/>
<dbReference type="Ensembl" id="ENST00000366684.7">
    <property type="protein sequence ID" value="ENSP00000355645.3"/>
    <property type="gene ID" value="ENSG00000143632.15"/>
</dbReference>
<dbReference type="GeneID" id="58"/>
<dbReference type="KEGG" id="hsa:58"/>
<dbReference type="MANE-Select" id="ENST00000366684.7">
    <property type="protein sequence ID" value="ENSP00000355645.3"/>
    <property type="RefSeq nucleotide sequence ID" value="NM_001100.4"/>
    <property type="RefSeq protein sequence ID" value="NP_001091.1"/>
</dbReference>
<dbReference type="UCSC" id="uc001htm.4">
    <property type="organism name" value="human"/>
</dbReference>
<dbReference type="AGR" id="HGNC:129"/>
<dbReference type="CTD" id="58"/>
<dbReference type="DisGeNET" id="58"/>
<dbReference type="GeneCards" id="ACTA1"/>
<dbReference type="HGNC" id="HGNC:129">
    <property type="gene designation" value="ACTA1"/>
</dbReference>
<dbReference type="HPA" id="ENSG00000143632">
    <property type="expression patterns" value="Tissue enriched (skeletal)"/>
</dbReference>
<dbReference type="MalaCards" id="ACTA1"/>
<dbReference type="MIM" id="102610">
    <property type="type" value="gene"/>
</dbReference>
<dbReference type="MIM" id="161800">
    <property type="type" value="phenotype"/>
</dbReference>
<dbReference type="MIM" id="616852">
    <property type="type" value="phenotype"/>
</dbReference>
<dbReference type="MIM" id="620265">
    <property type="type" value="phenotype"/>
</dbReference>
<dbReference type="MIM" id="620278">
    <property type="type" value="phenotype"/>
</dbReference>
<dbReference type="neXtProt" id="NX_P68133"/>
<dbReference type="OpenTargets" id="ENSG00000143632"/>
<dbReference type="Orphanet" id="171439">
    <property type="disease" value="Childhood-onset nemaline myopathy"/>
</dbReference>
<dbReference type="Orphanet" id="2020">
    <property type="disease" value="Congenital fiber-type disproportion myopathy"/>
</dbReference>
<dbReference type="Orphanet" id="98904">
    <property type="disease" value="Congenital myopathy with excess of thin filaments"/>
</dbReference>
<dbReference type="Orphanet" id="171433">
    <property type="disease" value="Intermediate nemaline myopathy"/>
</dbReference>
<dbReference type="Orphanet" id="447977">
    <property type="disease" value="Progressive scapulohumeroperoneal distal myopathy"/>
</dbReference>
<dbReference type="Orphanet" id="97244">
    <property type="disease" value="Rigid spine syndrome"/>
</dbReference>
<dbReference type="Orphanet" id="171430">
    <property type="disease" value="Severe congenital nemaline myopathy"/>
</dbReference>
<dbReference type="Orphanet" id="171436">
    <property type="disease" value="Typical nemaline myopathy"/>
</dbReference>
<dbReference type="Orphanet" id="97240">
    <property type="disease" value="Zebra body myopathy"/>
</dbReference>
<dbReference type="PharmGKB" id="PA24455"/>
<dbReference type="VEuPathDB" id="HostDB:ENSG00000143632"/>
<dbReference type="eggNOG" id="KOG0676">
    <property type="taxonomic scope" value="Eukaryota"/>
</dbReference>
<dbReference type="GeneTree" id="ENSGT00940000156048"/>
<dbReference type="InParanoid" id="P68133"/>
<dbReference type="OMA" id="EDAPRCC"/>
<dbReference type="OrthoDB" id="9816491at2759"/>
<dbReference type="PAN-GO" id="P68133">
    <property type="GO annotations" value="5 GO annotations based on evolutionary models"/>
</dbReference>
<dbReference type="PhylomeDB" id="P68133"/>
<dbReference type="TreeFam" id="TF354237"/>
<dbReference type="PathwayCommons" id="P68133"/>
<dbReference type="Reactome" id="R-HSA-390522">
    <property type="pathway name" value="Striated Muscle Contraction"/>
</dbReference>
<dbReference type="Reactome" id="R-HSA-9913351">
    <property type="pathway name" value="Formation of the dystrophin-glycoprotein complex (DGC)"/>
</dbReference>
<dbReference type="SignaLink" id="P68133"/>
<dbReference type="SIGNOR" id="P68133"/>
<dbReference type="BioGRID-ORCS" id="58">
    <property type="hits" value="21 hits in 1153 CRISPR screens"/>
</dbReference>
<dbReference type="ChiTaRS" id="ACTA1">
    <property type="organism name" value="human"/>
</dbReference>
<dbReference type="GeneWiki" id="Actin,_alpha_1"/>
<dbReference type="GenomeRNAi" id="58"/>
<dbReference type="Pharos" id="P68133">
    <property type="development level" value="Tbio"/>
</dbReference>
<dbReference type="PRO" id="PR:P68133"/>
<dbReference type="Proteomes" id="UP000005640">
    <property type="component" value="Chromosome 1"/>
</dbReference>
<dbReference type="RNAct" id="P68133">
    <property type="molecule type" value="protein"/>
</dbReference>
<dbReference type="Bgee" id="ENSG00000143632">
    <property type="expression patterns" value="Expressed in skeletal muscle tissue of biceps brachii and 132 other cell types or tissues"/>
</dbReference>
<dbReference type="ExpressionAtlas" id="P68133">
    <property type="expression patterns" value="baseline and differential"/>
</dbReference>
<dbReference type="GO" id="GO:0015629">
    <property type="term" value="C:actin cytoskeleton"/>
    <property type="evidence" value="ECO:0000315"/>
    <property type="project" value="UniProtKB"/>
</dbReference>
<dbReference type="GO" id="GO:0005884">
    <property type="term" value="C:actin filament"/>
    <property type="evidence" value="ECO:0000314"/>
    <property type="project" value="UniProtKB"/>
</dbReference>
<dbReference type="GO" id="GO:0072562">
    <property type="term" value="C:blood microparticle"/>
    <property type="evidence" value="ECO:0007005"/>
    <property type="project" value="UniProtKB"/>
</dbReference>
<dbReference type="GO" id="GO:0044297">
    <property type="term" value="C:cell body"/>
    <property type="evidence" value="ECO:0000250"/>
    <property type="project" value="AgBase"/>
</dbReference>
<dbReference type="GO" id="GO:0005829">
    <property type="term" value="C:cytosol"/>
    <property type="evidence" value="ECO:0000304"/>
    <property type="project" value="Reactome"/>
</dbReference>
<dbReference type="GO" id="GO:0070062">
    <property type="term" value="C:extracellular exosome"/>
    <property type="evidence" value="ECO:0007005"/>
    <property type="project" value="UniProtKB"/>
</dbReference>
<dbReference type="GO" id="GO:0005615">
    <property type="term" value="C:extracellular space"/>
    <property type="evidence" value="ECO:0007005"/>
    <property type="project" value="UniProtKB"/>
</dbReference>
<dbReference type="GO" id="GO:0030175">
    <property type="term" value="C:filopodium"/>
    <property type="evidence" value="ECO:0000250"/>
    <property type="project" value="AgBase"/>
</dbReference>
<dbReference type="GO" id="GO:0030027">
    <property type="term" value="C:lamellipodium"/>
    <property type="evidence" value="ECO:0000250"/>
    <property type="project" value="AgBase"/>
</dbReference>
<dbReference type="GO" id="GO:0030017">
    <property type="term" value="C:sarcomere"/>
    <property type="evidence" value="ECO:0000314"/>
    <property type="project" value="UniProtKB"/>
</dbReference>
<dbReference type="GO" id="GO:0001725">
    <property type="term" value="C:stress fiber"/>
    <property type="evidence" value="ECO:0000314"/>
    <property type="project" value="UniProtKB"/>
</dbReference>
<dbReference type="GO" id="GO:0005865">
    <property type="term" value="C:striated muscle thin filament"/>
    <property type="evidence" value="ECO:0000314"/>
    <property type="project" value="UniProtKB"/>
</dbReference>
<dbReference type="GO" id="GO:0043531">
    <property type="term" value="F:ADP binding"/>
    <property type="evidence" value="ECO:0000304"/>
    <property type="project" value="UniProtKB"/>
</dbReference>
<dbReference type="GO" id="GO:0005524">
    <property type="term" value="F:ATP binding"/>
    <property type="evidence" value="ECO:0000304"/>
    <property type="project" value="UniProtKB"/>
</dbReference>
<dbReference type="GO" id="GO:0016787">
    <property type="term" value="F:hydrolase activity"/>
    <property type="evidence" value="ECO:0007669"/>
    <property type="project" value="UniProtKB-KW"/>
</dbReference>
<dbReference type="GO" id="GO:0017022">
    <property type="term" value="F:myosin binding"/>
    <property type="evidence" value="ECO:0000304"/>
    <property type="project" value="UniProtKB"/>
</dbReference>
<dbReference type="GO" id="GO:0005200">
    <property type="term" value="F:structural constituent of cytoskeleton"/>
    <property type="evidence" value="ECO:0000304"/>
    <property type="project" value="UniProtKB"/>
</dbReference>
<dbReference type="GO" id="GO:0090131">
    <property type="term" value="P:mesenchyme migration"/>
    <property type="evidence" value="ECO:0000250"/>
    <property type="project" value="AgBase"/>
</dbReference>
<dbReference type="GO" id="GO:0006936">
    <property type="term" value="P:muscle contraction"/>
    <property type="evidence" value="ECO:0000304"/>
    <property type="project" value="UniProtKB"/>
</dbReference>
<dbReference type="GO" id="GO:0010628">
    <property type="term" value="P:positive regulation of gene expression"/>
    <property type="evidence" value="ECO:0000250"/>
    <property type="project" value="AgBase"/>
</dbReference>
<dbReference type="GO" id="GO:0048741">
    <property type="term" value="P:skeletal muscle fiber development"/>
    <property type="evidence" value="ECO:0000250"/>
    <property type="project" value="UniProtKB"/>
</dbReference>
<dbReference type="GO" id="GO:0030240">
    <property type="term" value="P:skeletal muscle thin filament assembly"/>
    <property type="evidence" value="ECO:0000315"/>
    <property type="project" value="UniProtKB"/>
</dbReference>
<dbReference type="CDD" id="cd10224">
    <property type="entry name" value="ASKHA_NBD_actin"/>
    <property type="match status" value="1"/>
</dbReference>
<dbReference type="FunFam" id="3.30.420.40:FF:000131">
    <property type="entry name" value="Actin, alpha skeletal muscle"/>
    <property type="match status" value="1"/>
</dbReference>
<dbReference type="FunFam" id="3.30.420.40:FF:000291">
    <property type="entry name" value="Actin, alpha skeletal muscle"/>
    <property type="match status" value="1"/>
</dbReference>
<dbReference type="FunFam" id="3.90.640.10:FF:000047">
    <property type="entry name" value="Actin, alpha skeletal muscle"/>
    <property type="match status" value="1"/>
</dbReference>
<dbReference type="FunFam" id="3.30.420.40:FF:000058">
    <property type="entry name" value="Putative actin-related protein 5"/>
    <property type="match status" value="1"/>
</dbReference>
<dbReference type="Gene3D" id="3.30.420.40">
    <property type="match status" value="2"/>
</dbReference>
<dbReference type="Gene3D" id="3.90.640.10">
    <property type="entry name" value="Actin, Chain A, domain 4"/>
    <property type="match status" value="1"/>
</dbReference>
<dbReference type="InterPro" id="IPR004000">
    <property type="entry name" value="Actin"/>
</dbReference>
<dbReference type="InterPro" id="IPR020902">
    <property type="entry name" value="Actin/actin-like_CS"/>
</dbReference>
<dbReference type="InterPro" id="IPR004001">
    <property type="entry name" value="Actin_CS"/>
</dbReference>
<dbReference type="InterPro" id="IPR043129">
    <property type="entry name" value="ATPase_NBD"/>
</dbReference>
<dbReference type="PANTHER" id="PTHR11937">
    <property type="entry name" value="ACTIN"/>
    <property type="match status" value="1"/>
</dbReference>
<dbReference type="Pfam" id="PF00022">
    <property type="entry name" value="Actin"/>
    <property type="match status" value="1"/>
</dbReference>
<dbReference type="PRINTS" id="PR00190">
    <property type="entry name" value="ACTIN"/>
</dbReference>
<dbReference type="SMART" id="SM00268">
    <property type="entry name" value="ACTIN"/>
    <property type="match status" value="1"/>
</dbReference>
<dbReference type="SUPFAM" id="SSF53067">
    <property type="entry name" value="Actin-like ATPase domain"/>
    <property type="match status" value="2"/>
</dbReference>
<dbReference type="PROSITE" id="PS00406">
    <property type="entry name" value="ACTINS_1"/>
    <property type="match status" value="1"/>
</dbReference>
<dbReference type="PROSITE" id="PS00432">
    <property type="entry name" value="ACTINS_2"/>
    <property type="match status" value="1"/>
</dbReference>
<dbReference type="PROSITE" id="PS01132">
    <property type="entry name" value="ACTINS_ACT_LIKE"/>
    <property type="match status" value="1"/>
</dbReference>
<feature type="initiator methionine" description="Removed">
    <location>
        <position position="1"/>
    </location>
</feature>
<feature type="chain" id="PRO_0000442803" description="Actin, alpha skeletal muscle, intermediate form" evidence="2">
    <location>
        <begin position="2"/>
        <end position="377"/>
    </location>
</feature>
<feature type="chain" id="PRO_0000442804" description="Actin, alpha skeletal muscle" evidence="4">
    <location>
        <begin position="3"/>
        <end position="377"/>
    </location>
</feature>
<feature type="region of interest" description="Interaction with alpha-actinin" evidence="4">
    <location>
        <begin position="112"/>
        <end position="125"/>
    </location>
</feature>
<feature type="region of interest" description="Interaction with alpha-actinin" evidence="4">
    <location>
        <begin position="360"/>
        <end position="372"/>
    </location>
</feature>
<feature type="modified residue" description="N-acetylcysteine; in intermediate form" evidence="3">
    <location>
        <position position="2"/>
    </location>
</feature>
<feature type="modified residue" description="Methionine (R)-sulfoxide" evidence="3">
    <location>
        <position position="46"/>
    </location>
</feature>
<feature type="modified residue" description="Methionine (R)-sulfoxide" evidence="3">
    <location>
        <position position="49"/>
    </location>
</feature>
<feature type="modified residue" description="N6-malonyllysine" evidence="21">
    <location>
        <position position="63"/>
    </location>
</feature>
<feature type="modified residue" description="Tele-methylhistidine" evidence="28">
    <location>
        <position position="75"/>
    </location>
</feature>
<feature type="modified residue" description="N6-methyllysine" evidence="24">
    <location>
        <position position="86"/>
    </location>
</feature>
<feature type="cross-link" description="Isoglutamyl lysine isopeptide (Lys-Glu) (interchain with E-272); by Vibrio toxins RtxA and VgrG1" evidence="1">
    <location>
        <position position="52"/>
    </location>
</feature>
<feature type="cross-link" description="Isoglutamyl lysine isopeptide (Glu-Lys) (interchain with K-52); by Vibrio toxins RtxA and VgrG1" evidence="1">
    <location>
        <position position="272"/>
    </location>
</feature>
<feature type="sequence variant" id="VAR_062424" description="In CMYO2A; some patients have core lesions on muscle biopsy; dbSNP:rs121909527." evidence="15">
    <original>D</original>
    <variation>Y</variation>
    <location>
        <position position="3"/>
    </location>
</feature>
<feature type="sequence variant" id="VAR_011680" description="In CMYO2A; dbSNP:rs121909521." evidence="6">
    <original>G</original>
    <variation>R</variation>
    <location>
        <position position="17"/>
    </location>
</feature>
<feature type="sequence variant" id="VAR_085717" description="In CMYO2A; dbSNP:rs121909521." evidence="27">
    <original>G</original>
    <variation>S</variation>
    <location>
        <position position="17"/>
    </location>
</feature>
<feature type="sequence variant" id="VAR_062425" description="In CMYO2A." evidence="10">
    <original>D</original>
    <variation>N</variation>
    <location>
        <position position="27"/>
    </location>
</feature>
<feature type="sequence variant" id="VAR_062426" description="In CMYO2A; dbSNP:rs1553255521." evidence="10 12">
    <original>V</original>
    <variation>L</variation>
    <location>
        <position position="37"/>
    </location>
</feature>
<feature type="sequence variant" id="VAR_062427" description="In CMYO2A." evidence="10 12">
    <original>P</original>
    <variation>L</variation>
    <location>
        <position position="40"/>
    </location>
</feature>
<feature type="sequence variant" id="VAR_015579" description="In CMYO2A; dbSNP:rs2102736554." evidence="6 10 12">
    <original>H</original>
    <variation>Y</variation>
    <location>
        <position position="42"/>
    </location>
</feature>
<feature type="sequence variant" id="VAR_062428" description="In CMYO2A; dbSNP:rs1659984269." evidence="10 12">
    <original>Q</original>
    <variation>R</variation>
    <location>
        <position position="43"/>
    </location>
</feature>
<feature type="sequence variant" id="VAR_062429" description="In CMYO2A; dbSNP:rs1558082125." evidence="10">
    <original>G</original>
    <variation>V</variation>
    <location>
        <position position="44"/>
    </location>
</feature>
<feature type="sequence variant" id="VAR_062430" description="In CMYO2A; dbSNP:rs398123562." evidence="10">
    <original>V</original>
    <variation>F</variation>
    <location>
        <position position="45"/>
    </location>
</feature>
<feature type="sequence variant" id="VAR_062431" description="In CMYO2A; dbSNP:rs1553255502." evidence="10 12">
    <original>I</original>
    <variation>N</variation>
    <location>
        <position position="66"/>
    </location>
</feature>
<feature type="sequence variant" id="VAR_062432" description="In CMYO2A." evidence="11">
    <original>T</original>
    <variation>I</variation>
    <location>
        <position position="68"/>
    </location>
</feature>
<feature type="sequence variant" id="VAR_083589" description="In CMYO2A; dbSNP:rs1659978909." evidence="25">
    <original>P</original>
    <variation>R</variation>
    <location>
        <position position="72"/>
    </location>
</feature>
<feature type="sequence variant" id="VAR_062433" description="In CMYO2A." evidence="11">
    <original>E</original>
    <variation>K</variation>
    <location>
        <position position="74"/>
    </location>
</feature>
<feature type="sequence variant" id="VAR_062434" description="In CMYO2A." evidence="10 12">
    <original>H</original>
    <variation>L</variation>
    <location>
        <position position="75"/>
    </location>
</feature>
<feature type="sequence variant" id="VAR_062435" description="In CMYO2A." evidence="10 12">
    <original>H</original>
    <variation>R</variation>
    <location>
        <position position="75"/>
    </location>
</feature>
<feature type="sequence variant" id="VAR_062436" description="In CMYO2A." evidence="12">
    <original>I</original>
    <variation>L</variation>
    <location>
        <position position="77"/>
    </location>
</feature>
<feature type="sequence variant" id="VAR_062437" description="In CMYO2A." evidence="10 12">
    <original>T</original>
    <variation>A</variation>
    <location>
        <position position="79"/>
    </location>
</feature>
<feature type="sequence variant" id="VAR_062438" description="In CMYO2A." evidence="12">
    <original>E</original>
    <variation>K</variation>
    <location>
        <position position="85"/>
    </location>
</feature>
<feature type="sequence variant" id="VAR_011681" description="In CMYO2B; dbSNP:rs121909519." evidence="6 10">
    <original>L</original>
    <variation>P</variation>
    <location>
        <position position="96"/>
    </location>
</feature>
<feature type="sequence variant" id="VAR_062439" description="In CMYO2A; dbSNP:rs1659975786." evidence="10">
    <original>A</original>
    <variation>T</variation>
    <location>
        <position position="116"/>
    </location>
</feature>
<feature type="sequence variant" id="VAR_083590" description="In CMYO2A; dbSNP:rs1659975747." evidence="25">
    <original>A</original>
    <variation>V</variation>
    <location>
        <position position="116"/>
    </location>
</feature>
<feature type="sequence variant" id="VAR_011682" description="In CMYO2A; dbSNP:rs121909520." evidence="6 9 10 11">
    <original>N</original>
    <variation>S</variation>
    <location>
        <position position="117"/>
    </location>
</feature>
<feature type="sequence variant" id="VAR_062440" description="In CMYO2A." evidence="10">
    <original>N</original>
    <variation>T</variation>
    <location>
        <position position="117"/>
    </location>
</feature>
<feature type="sequence variant" id="VAR_062441" description="In CMYO2A." evidence="10">
    <original>R</original>
    <variation>H</variation>
    <location>
        <position position="118"/>
    </location>
</feature>
<feature type="sequence variant" id="VAR_013470" description="In CMYO2A; dbSNP:rs1659974377." evidence="6 8 10">
    <original>M</original>
    <variation>V</variation>
    <location>
        <position position="134"/>
    </location>
</feature>
<feature type="sequence variant" id="VAR_062442" description="In CMYO2A." evidence="10 12">
    <original>V</original>
    <variation>A</variation>
    <location>
        <position position="136"/>
    </location>
</feature>
<feature type="sequence variant" id="VAR_011683" description="In CMYO2A; dbSNP:rs121909526." evidence="9 10 11">
    <original>I</original>
    <variation>M</variation>
    <location>
        <position position="138"/>
    </location>
</feature>
<feature type="sequence variant" id="VAR_062443" description="In CMYO2A." evidence="10">
    <original>A</original>
    <variation>P</variation>
    <location>
        <position position="140"/>
    </location>
</feature>
<feature type="sequence variant" id="VAR_062444" description="In CMYO2A; dbSNP:rs1553255482." evidence="10">
    <original>L</original>
    <variation>P</variation>
    <location>
        <position position="142"/>
    </location>
</feature>
<feature type="sequence variant" id="VAR_062445" description="In CMYO2A." evidence="10 12">
    <original>G</original>
    <variation>D</variation>
    <location>
        <position position="148"/>
    </location>
</feature>
<feature type="sequence variant" id="VAR_062446" description="In CMYO2A." evidence="10">
    <original>T</original>
    <variation>N</variation>
    <location>
        <position position="150"/>
    </location>
</feature>
<feature type="sequence variant" id="VAR_062447" description="In CMYO2A." evidence="10">
    <original>D</original>
    <variation>N</variation>
    <location>
        <position position="156"/>
    </location>
</feature>
<feature type="sequence variant" id="VAR_011684" description="In CMYO2A; dbSNP:rs121909522." evidence="6 10 11">
    <original>V</original>
    <variation>L</variation>
    <location>
        <position position="165"/>
    </location>
</feature>
<feature type="sequence variant" id="VAR_062448" description="In CMYO2A; results in sequestration of sarcomeric and Z line proteins into intranuclear aggregates; there is some evidence of muscle regeneration suggesting a compensatory effect; dbSNP:rs121909522." evidence="10 11 16 20">
    <original>V</original>
    <variation>M</variation>
    <location>
        <position position="165"/>
    </location>
</feature>
<feature type="sequence variant" id="VAR_062449" description="In CMYO2A." evidence="10">
    <original>A</original>
    <variation>G</variation>
    <location>
        <position position="172"/>
    </location>
</feature>
<feature type="sequence variant" id="VAR_062450" description="In CMYO2A." evidence="12">
    <original>D</original>
    <variation>G</variation>
    <location>
        <position position="181"/>
    </location>
</feature>
<feature type="sequence variant" id="VAR_062451" description="In CMYO2A." evidence="10">
    <original>D</original>
    <variation>H</variation>
    <location>
        <position position="181"/>
    </location>
</feature>
<feature type="sequence variant" id="VAR_062452" description="In CMYO2A." evidence="10">
    <original>D</original>
    <variation>N</variation>
    <location>
        <position position="181"/>
    </location>
</feature>
<feature type="sequence variant" id="VAR_015580" description="In CMYO2A." evidence="6 10 12">
    <original>G</original>
    <variation>D</variation>
    <location>
        <position position="184"/>
    </location>
</feature>
<feature type="sequence variant" id="VAR_015582" description="In CMYO2A; dbSNP:rs1064794287." evidence="6 10">
    <original>R</original>
    <variation>C</variation>
    <location>
        <position position="185"/>
    </location>
</feature>
<feature type="sequence variant" id="VAR_062453" description="In CMYO2A; requires 2 nucleotide substitutions.">
    <original>R</original>
    <variation>D</variation>
    <location>
        <position position="185"/>
    </location>
</feature>
<feature type="sequence variant" id="VAR_015581" description="In CMYO2A." evidence="9 10 11 12">
    <original>R</original>
    <variation>G</variation>
    <location>
        <position position="185"/>
    </location>
</feature>
<feature type="sequence variant" id="VAR_062454" description="In CMYO2A; dbSNP:rs1064794287." evidence="10">
    <original>R</original>
    <variation>S</variation>
    <location>
        <position position="185"/>
    </location>
</feature>
<feature type="sequence variant" id="VAR_076426" description="In SHPM; no effect on cytoskeleton structure; dbSNP:rs869312739." evidence="26">
    <original>E</original>
    <variation>D</variation>
    <location>
        <position position="197"/>
    </location>
</feature>
<feature type="sequence variant" id="VAR_062455" description="In CMYO2A." evidence="10">
    <original>R</original>
    <variation>L</variation>
    <location>
        <position position="198"/>
    </location>
</feature>
<feature type="sequence variant" id="VAR_062456" description="In CMYO2A." evidence="12">
    <original>G</original>
    <variation>S</variation>
    <location>
        <position position="199"/>
    </location>
</feature>
<feature type="sequence variant" id="VAR_032917" description="In CMYO2C; dbSNP:rs121909530." evidence="14">
    <original>L</original>
    <variation>P</variation>
    <location>
        <position position="223"/>
    </location>
</feature>
<feature type="sequence variant" id="VAR_062457" description="In CMYO2A." evidence="10 12">
    <original>E</original>
    <variation>G</variation>
    <location>
        <position position="226"/>
    </location>
</feature>
<feature type="sequence variant" id="VAR_062458" description="In CMYO2A; dbSNP:rs1057521118." evidence="10">
    <original>E</original>
    <variation>Q</variation>
    <location>
        <position position="226"/>
    </location>
</feature>
<feature type="sequence variant" id="VAR_062459" description="In CMYO2A; requires 2 nucleotide substitutions.">
    <original>N</original>
    <variation>V</variation>
    <location>
        <position position="227"/>
    </location>
</feature>
<feature type="sequence variant" id="VAR_062460" description="In CMYO2A." evidence="10 12">
    <original>M</original>
    <variation>I</variation>
    <location>
        <position position="229"/>
    </location>
</feature>
<feature type="sequence variant" id="VAR_062461" description="In CMYO2A." evidence="10">
    <original>M</original>
    <variation>T</variation>
    <location>
        <position position="229"/>
    </location>
</feature>
<feature type="sequence variant" id="VAR_062462" description="In CMYO2A; dbSNP:rs794727714." evidence="10 12">
    <original>M</original>
    <variation>V</variation>
    <location>
        <position position="229"/>
    </location>
</feature>
<feature type="sequence variant" id="VAR_062463" description="In CMYO2A; dbSNP:rs367543051." evidence="10">
    <original>E</original>
    <variation>K</variation>
    <location>
        <position position="243"/>
    </location>
</feature>
<feature type="sequence variant" id="VAR_062464" description="In CMYO2A; dbSNP:rs1659954634." evidence="10">
    <original>Q</original>
    <variation>K</variation>
    <location>
        <position position="248"/>
    </location>
</feature>
<feature type="sequence variant" id="VAR_062465" description="In CMYO2A." evidence="10 12">
    <original>Q</original>
    <variation>R</variation>
    <location>
        <position position="248"/>
    </location>
</feature>
<feature type="sequence variant" id="VAR_062466" description="In CMYO2A." evidence="10 12">
    <original>G</original>
    <variation>D</variation>
    <location>
        <position position="253"/>
    </location>
</feature>
<feature type="sequence variant" id="VAR_015583" description="In CMYO2A; dbSNP:rs1659953887." evidence="6 10">
    <original>R</original>
    <variation>H</variation>
    <location>
        <position position="258"/>
    </location>
</feature>
<feature type="sequence variant" id="VAR_062467" description="In CMYO2A." evidence="10">
    <original>R</original>
    <variation>L</variation>
    <location>
        <position position="258"/>
    </location>
</feature>
<feature type="sequence variant" id="VAR_011685" description="In CMYO2B; dbSNP:rs121909523." evidence="6 10">
    <original>E</original>
    <variation>V</variation>
    <location>
        <position position="261"/>
    </location>
</feature>
<feature type="sequence variant" id="VAR_015584" description="In CMYO2A." evidence="6 10">
    <original>Q</original>
    <variation>L</variation>
    <location>
        <position position="265"/>
    </location>
</feature>
<feature type="sequence variant" id="VAR_011686" description="In CMYO2A; dbSNP:rs121909525." evidence="9 10 11 12">
    <original>G</original>
    <variation>C</variation>
    <location>
        <position position="270"/>
    </location>
</feature>
<feature type="sequence variant" id="VAR_062468" description="In CMYO2A; dbSNP:rs1553255362." evidence="13">
    <original>G</original>
    <variation>D</variation>
    <location>
        <position position="270"/>
    </location>
</feature>
<feature type="sequence variant" id="VAR_062469" description="In CMYO2A; dbSNP:rs121909525." evidence="10">
    <original>G</original>
    <variation>R</variation>
    <location>
        <position position="270"/>
    </location>
</feature>
<feature type="sequence variant" id="VAR_013471" description="In CMYO2A; dbSNP:rs1553255360." evidence="8 10">
    <original>M</original>
    <variation>R</variation>
    <location>
        <position position="271"/>
    </location>
</feature>
<feature type="sequence variant" id="VAR_062470" description="In CMYO2A; dbSNP:rs1553255357." evidence="10">
    <original>A</original>
    <variation>E</variation>
    <location>
        <position position="274"/>
    </location>
</feature>
<feature type="sequence variant" id="VAR_062471" description="In CMYO2A; dbSNP:rs2102735278." evidence="10 12">
    <original>Y</original>
    <variation>H</variation>
    <location>
        <position position="281"/>
    </location>
</feature>
<feature type="sequence variant" id="VAR_015585" description="In CMYO2A; dbSNP:rs2102735270." evidence="6 10 12">
    <original>N</original>
    <variation>K</variation>
    <location>
        <position position="282"/>
    </location>
</feature>
<feature type="sequence variant" id="VAR_062472" description="In CMYO2A." evidence="10">
    <original>M</original>
    <variation>K</variation>
    <location>
        <position position="285"/>
    </location>
</feature>
<feature type="sequence variant" id="VAR_015586" description="In CMYO2A; formation of rod-like structure." evidence="6 10 12 26">
    <original>D</original>
    <variation>G</variation>
    <location>
        <position position="288"/>
    </location>
</feature>
<feature type="sequence variant" id="VAR_032918" description="In CMYO2C; results in decreased motility due to abnormal interactions between actin and tropomyosin with tropomyosin stabilized in the 'off' position; the mutant protein incorporates into actin filaments and does not result in increased actin aggregation or disruption of the sarcomere; dbSNP:rs121909529." evidence="14 19">
    <original>D</original>
    <variation>V</variation>
    <location>
        <position position="294"/>
    </location>
</feature>
<feature type="sequence variant" id="VAR_076427" description="In CMYO2A; no effect on actin structure; higher sensitivity to calcium; dbSNP:rs398122936." evidence="22">
    <original>K</original>
    <variation>N</variation>
    <location>
        <position position="328"/>
    </location>
</feature>
<feature type="sequence variant" id="VAR_032919" description="In CMYO2C; dbSNP:rs121909531." evidence="14">
    <original>P</original>
    <variation>S</variation>
    <location>
        <position position="334"/>
    </location>
</feature>
<feature type="sequence variant" id="VAR_062473" description="In CMYO2A; dbSNP:rs121909528." evidence="15">
    <original>E</original>
    <variation>A</variation>
    <location>
        <position position="336"/>
    </location>
</feature>
<feature type="sequence variant" id="VAR_062474" description="In CMYO2A." evidence="18">
    <original>K</original>
    <variation>E</variation>
    <location>
        <position position="338"/>
    </location>
</feature>
<feature type="sequence variant" id="VAR_062475" description="In CMYO2A." evidence="10">
    <original>K</original>
    <variation>I</variation>
    <location>
        <position position="338"/>
    </location>
</feature>
<feature type="sequence variant" id="VAR_062476" description="In CMYO2A; dbSNP:rs2102735031." evidence="10">
    <original>S</original>
    <variation>L</variation>
    <location>
        <position position="350"/>
    </location>
</feature>
<feature type="sequence variant" id="VAR_076428" description="In CMYO2A; found in a patient with a rare combination of CMYO2A and dilated cardiomyopathy; dbSNP:rs587777354." evidence="23">
    <original>W</original>
    <variation>C</variation>
    <location>
        <position position="358"/>
    </location>
</feature>
<feature type="sequence variant" id="VAR_015587" description="In CMYO2A; dbSNP:rs121909524." evidence="9 10 11">
    <original>I</original>
    <variation>L</variation>
    <location>
        <position position="359"/>
    </location>
</feature>
<feature type="sequence variant" id="VAR_011687" description="In CMYO2A." evidence="6 10">
    <original>V</original>
    <variation>F</variation>
    <location>
        <position position="372"/>
    </location>
</feature>
<feature type="sequence variant" id="VAR_062477" description="In CMYO2A." evidence="10">
    <original>R</original>
    <variation>S</variation>
    <location>
        <position position="374"/>
    </location>
</feature>
<feature type="sequence variant" id="VAR_062478" description="In CMYO2A; dbSNP:rs1571892209." evidence="13">
    <original>K</original>
    <variation>E</variation>
    <location>
        <position position="375"/>
    </location>
</feature>
<feature type="sequence variant" id="VAR_062479" description="In CMYO2A." evidence="10 12">
    <original>K</original>
    <variation>Q</variation>
    <location>
        <position position="375"/>
    </location>
</feature>
<feature type="strand" evidence="34">
    <location>
        <begin position="10"/>
        <end position="14"/>
    </location>
</feature>
<feature type="strand" evidence="34">
    <location>
        <begin position="16"/>
        <end position="23"/>
    </location>
</feature>
<feature type="strand" evidence="34">
    <location>
        <begin position="30"/>
        <end position="34"/>
    </location>
</feature>
<feature type="strand" evidence="33">
    <location>
        <begin position="42"/>
        <end position="44"/>
    </location>
</feature>
<feature type="strand" evidence="34">
    <location>
        <begin position="46"/>
        <end position="49"/>
    </location>
</feature>
<feature type="strand" evidence="32">
    <location>
        <begin position="53"/>
        <end position="55"/>
    </location>
</feature>
<feature type="helix" evidence="34">
    <location>
        <begin position="58"/>
        <end position="62"/>
    </location>
</feature>
<feature type="helix" evidence="34">
    <location>
        <begin position="64"/>
        <end position="66"/>
    </location>
</feature>
<feature type="strand" evidence="34">
    <location>
        <begin position="72"/>
        <end position="74"/>
    </location>
</feature>
<feature type="helix" evidence="34">
    <location>
        <begin position="81"/>
        <end position="94"/>
    </location>
</feature>
<feature type="turn" evidence="34">
    <location>
        <begin position="100"/>
        <end position="102"/>
    </location>
</feature>
<feature type="strand" evidence="34">
    <location>
        <begin position="105"/>
        <end position="109"/>
    </location>
</feature>
<feature type="helix" evidence="34">
    <location>
        <begin position="115"/>
        <end position="127"/>
    </location>
</feature>
<feature type="strand" evidence="34">
    <location>
        <begin position="132"/>
        <end position="138"/>
    </location>
</feature>
<feature type="helix" evidence="34">
    <location>
        <begin position="139"/>
        <end position="147"/>
    </location>
</feature>
<feature type="strand" evidence="34">
    <location>
        <begin position="150"/>
        <end position="157"/>
    </location>
</feature>
<feature type="strand" evidence="34">
    <location>
        <begin position="162"/>
        <end position="168"/>
    </location>
</feature>
<feature type="strand" evidence="34">
    <location>
        <begin position="178"/>
        <end position="180"/>
    </location>
</feature>
<feature type="helix" evidence="34">
    <location>
        <begin position="184"/>
        <end position="195"/>
    </location>
</feature>
<feature type="helix" evidence="34">
    <location>
        <begin position="196"/>
        <end position="198"/>
    </location>
</feature>
<feature type="helix" evidence="34">
    <location>
        <begin position="205"/>
        <end position="218"/>
    </location>
</feature>
<feature type="helix" evidence="34">
    <location>
        <begin position="225"/>
        <end position="233"/>
    </location>
</feature>
<feature type="strand" evidence="34">
    <location>
        <begin position="240"/>
        <end position="243"/>
    </location>
</feature>
<feature type="strand" evidence="34">
    <location>
        <begin position="245"/>
        <end position="247"/>
    </location>
</feature>
<feature type="strand" evidence="34">
    <location>
        <begin position="249"/>
        <end position="255"/>
    </location>
</feature>
<feature type="turn" evidence="34">
    <location>
        <begin position="256"/>
        <end position="258"/>
    </location>
</feature>
<feature type="helix" evidence="34">
    <location>
        <begin position="260"/>
        <end position="262"/>
    </location>
</feature>
<feature type="helix" evidence="34">
    <location>
        <begin position="266"/>
        <end position="269"/>
    </location>
</feature>
<feature type="helix" evidence="34">
    <location>
        <begin position="276"/>
        <end position="285"/>
    </location>
</feature>
<feature type="turn" evidence="34">
    <location>
        <begin position="289"/>
        <end position="291"/>
    </location>
</feature>
<feature type="helix" evidence="34">
    <location>
        <begin position="292"/>
        <end position="297"/>
    </location>
</feature>
<feature type="strand" evidence="34">
    <location>
        <begin position="299"/>
        <end position="303"/>
    </location>
</feature>
<feature type="turn" evidence="34">
    <location>
        <begin position="304"/>
        <end position="307"/>
    </location>
</feature>
<feature type="helix" evidence="34">
    <location>
        <begin position="311"/>
        <end position="322"/>
    </location>
</feature>
<feature type="helix" evidence="34">
    <location>
        <begin position="337"/>
        <end position="339"/>
    </location>
</feature>
<feature type="helix" evidence="34">
    <location>
        <begin position="340"/>
        <end position="349"/>
    </location>
</feature>
<feature type="helix" evidence="34">
    <location>
        <begin position="354"/>
        <end position="356"/>
    </location>
</feature>
<feature type="strand" evidence="34">
    <location>
        <begin position="357"/>
        <end position="360"/>
    </location>
</feature>
<feature type="helix" evidence="34">
    <location>
        <begin position="361"/>
        <end position="367"/>
    </location>
</feature>
<feature type="helix" evidence="34">
    <location>
        <begin position="371"/>
        <end position="374"/>
    </location>
</feature>
<proteinExistence type="evidence at protein level"/>
<accession>P68133</accession>
<accession>P02568</accession>
<accession>P99020</accession>
<accession>Q5T8M9</accession>
<reference key="1">
    <citation type="journal article" date="1983" name="Nucleic Acids Res.">
        <title>Isolation and characterization of cDNA clones for human skeletal muscle alpha actin.</title>
        <authorList>
            <person name="Hanauer A."/>
            <person name="Levin M."/>
            <person name="Heilig R."/>
            <person name="Daegelen D."/>
            <person name="Kahn A."/>
            <person name="Mandel J.-L."/>
        </authorList>
    </citation>
    <scope>NUCLEOTIDE SEQUENCE [MRNA]</scope>
    <source>
        <tissue>Skeletal muscle</tissue>
    </source>
</reference>
<reference key="2">
    <citation type="journal article" date="1988" name="Genomics">
        <title>Nucleotide sequence and expression of the human skeletal alpha-actin gene: evolution of functional regulatory domains.</title>
        <authorList>
            <person name="Taylor A."/>
            <person name="Erba H.P."/>
            <person name="Muscat G.E.O."/>
            <person name="Kedes L."/>
        </authorList>
    </citation>
    <scope>NUCLEOTIDE SEQUENCE [GENOMIC DNA]</scope>
</reference>
<reference key="3">
    <citation type="journal article" date="1999" name="Nat. Genet.">
        <title>Mutations in the skeletal muscle alpha-actin gene in patients with actin myopathy and nemaline myopathy.</title>
        <authorList>
            <person name="Nowak K.J."/>
            <person name="Wattanasirichaigoon D."/>
            <person name="Goebel H.H."/>
            <person name="Wilce M."/>
            <person name="Pelin K."/>
            <person name="Donner K."/>
            <person name="Jacob R.L."/>
            <person name="Hubner C."/>
            <person name="Oexle K."/>
            <person name="Anderson J.R."/>
            <person name="Verity C.M."/>
            <person name="North K.N."/>
        </authorList>
    </citation>
    <scope>NUCLEOTIDE SEQUENCE [GENOMIC DNA]</scope>
    <scope>VARIANTS CMYO2A ARG-17; TYR-42; SER-117; VAL-134; LEU-165; ASP-184; CYS-185; HIS-258; LEU-265; LYS-282; GLY-288 AND PHE-372</scope>
    <scope>VARIANTS CMYO2B PRO-96 AND VAL-261</scope>
</reference>
<reference key="4">
    <citation type="submission" date="2004-06" db="EMBL/GenBank/DDBJ databases">
        <title>Cloning of human full open reading frames in Gateway(TM) system entry vector (pDONR201).</title>
        <authorList>
            <person name="Ebert L."/>
            <person name="Schick M."/>
            <person name="Neubert P."/>
            <person name="Schatten R."/>
            <person name="Henze S."/>
            <person name="Korn B."/>
        </authorList>
    </citation>
    <scope>NUCLEOTIDE SEQUENCE [LARGE SCALE MRNA]</scope>
</reference>
<reference key="5">
    <citation type="journal article" date="2006" name="Nature">
        <title>The DNA sequence and biological annotation of human chromosome 1.</title>
        <authorList>
            <person name="Gregory S.G."/>
            <person name="Barlow K.F."/>
            <person name="McLay K.E."/>
            <person name="Kaul R."/>
            <person name="Swarbreck D."/>
            <person name="Dunham A."/>
            <person name="Scott C.E."/>
            <person name="Howe K.L."/>
            <person name="Woodfine K."/>
            <person name="Spencer C.C.A."/>
            <person name="Jones M.C."/>
            <person name="Gillson C."/>
            <person name="Searle S."/>
            <person name="Zhou Y."/>
            <person name="Kokocinski F."/>
            <person name="McDonald L."/>
            <person name="Evans R."/>
            <person name="Phillips K."/>
            <person name="Atkinson A."/>
            <person name="Cooper R."/>
            <person name="Jones C."/>
            <person name="Hall R.E."/>
            <person name="Andrews T.D."/>
            <person name="Lloyd C."/>
            <person name="Ainscough R."/>
            <person name="Almeida J.P."/>
            <person name="Ambrose K.D."/>
            <person name="Anderson F."/>
            <person name="Andrew R.W."/>
            <person name="Ashwell R.I.S."/>
            <person name="Aubin K."/>
            <person name="Babbage A.K."/>
            <person name="Bagguley C.L."/>
            <person name="Bailey J."/>
            <person name="Beasley H."/>
            <person name="Bethel G."/>
            <person name="Bird C.P."/>
            <person name="Bray-Allen S."/>
            <person name="Brown J.Y."/>
            <person name="Brown A.J."/>
            <person name="Buckley D."/>
            <person name="Burton J."/>
            <person name="Bye J."/>
            <person name="Carder C."/>
            <person name="Chapman J.C."/>
            <person name="Clark S.Y."/>
            <person name="Clarke G."/>
            <person name="Clee C."/>
            <person name="Cobley V."/>
            <person name="Collier R.E."/>
            <person name="Corby N."/>
            <person name="Coville G.J."/>
            <person name="Davies J."/>
            <person name="Deadman R."/>
            <person name="Dunn M."/>
            <person name="Earthrowl M."/>
            <person name="Ellington A.G."/>
            <person name="Errington H."/>
            <person name="Frankish A."/>
            <person name="Frankland J."/>
            <person name="French L."/>
            <person name="Garner P."/>
            <person name="Garnett J."/>
            <person name="Gay L."/>
            <person name="Ghori M.R.J."/>
            <person name="Gibson R."/>
            <person name="Gilby L.M."/>
            <person name="Gillett W."/>
            <person name="Glithero R.J."/>
            <person name="Grafham D.V."/>
            <person name="Griffiths C."/>
            <person name="Griffiths-Jones S."/>
            <person name="Grocock R."/>
            <person name="Hammond S."/>
            <person name="Harrison E.S.I."/>
            <person name="Hart E."/>
            <person name="Haugen E."/>
            <person name="Heath P.D."/>
            <person name="Holmes S."/>
            <person name="Holt K."/>
            <person name="Howden P.J."/>
            <person name="Hunt A.R."/>
            <person name="Hunt S.E."/>
            <person name="Hunter G."/>
            <person name="Isherwood J."/>
            <person name="James R."/>
            <person name="Johnson C."/>
            <person name="Johnson D."/>
            <person name="Joy A."/>
            <person name="Kay M."/>
            <person name="Kershaw J.K."/>
            <person name="Kibukawa M."/>
            <person name="Kimberley A.M."/>
            <person name="King A."/>
            <person name="Knights A.J."/>
            <person name="Lad H."/>
            <person name="Laird G."/>
            <person name="Lawlor S."/>
            <person name="Leongamornlert D.A."/>
            <person name="Lloyd D.M."/>
            <person name="Loveland J."/>
            <person name="Lovell J."/>
            <person name="Lush M.J."/>
            <person name="Lyne R."/>
            <person name="Martin S."/>
            <person name="Mashreghi-Mohammadi M."/>
            <person name="Matthews L."/>
            <person name="Matthews N.S.W."/>
            <person name="McLaren S."/>
            <person name="Milne S."/>
            <person name="Mistry S."/>
            <person name="Moore M.J.F."/>
            <person name="Nickerson T."/>
            <person name="O'Dell C.N."/>
            <person name="Oliver K."/>
            <person name="Palmeiri A."/>
            <person name="Palmer S.A."/>
            <person name="Parker A."/>
            <person name="Patel D."/>
            <person name="Pearce A.V."/>
            <person name="Peck A.I."/>
            <person name="Pelan S."/>
            <person name="Phelps K."/>
            <person name="Phillimore B.J."/>
            <person name="Plumb R."/>
            <person name="Rajan J."/>
            <person name="Raymond C."/>
            <person name="Rouse G."/>
            <person name="Saenphimmachak C."/>
            <person name="Sehra H.K."/>
            <person name="Sheridan E."/>
            <person name="Shownkeen R."/>
            <person name="Sims S."/>
            <person name="Skuce C.D."/>
            <person name="Smith M."/>
            <person name="Steward C."/>
            <person name="Subramanian S."/>
            <person name="Sycamore N."/>
            <person name="Tracey A."/>
            <person name="Tromans A."/>
            <person name="Van Helmond Z."/>
            <person name="Wall M."/>
            <person name="Wallis J.M."/>
            <person name="White S."/>
            <person name="Whitehead S.L."/>
            <person name="Wilkinson J.E."/>
            <person name="Willey D.L."/>
            <person name="Williams H."/>
            <person name="Wilming L."/>
            <person name="Wray P.W."/>
            <person name="Wu Z."/>
            <person name="Coulson A."/>
            <person name="Vaudin M."/>
            <person name="Sulston J.E."/>
            <person name="Durbin R.M."/>
            <person name="Hubbard T."/>
            <person name="Wooster R."/>
            <person name="Dunham I."/>
            <person name="Carter N.P."/>
            <person name="McVean G."/>
            <person name="Ross M.T."/>
            <person name="Harrow J."/>
            <person name="Olson M.V."/>
            <person name="Beck S."/>
            <person name="Rogers J."/>
            <person name="Bentley D.R."/>
        </authorList>
    </citation>
    <scope>NUCLEOTIDE SEQUENCE [LARGE SCALE GENOMIC DNA]</scope>
</reference>
<reference key="6">
    <citation type="submission" date="2005-07" db="EMBL/GenBank/DDBJ databases">
        <authorList>
            <person name="Mural R.J."/>
            <person name="Istrail S."/>
            <person name="Sutton G.G."/>
            <person name="Florea L."/>
            <person name="Halpern A.L."/>
            <person name="Mobarry C.M."/>
            <person name="Lippert R."/>
            <person name="Walenz B."/>
            <person name="Shatkay H."/>
            <person name="Dew I."/>
            <person name="Miller J.R."/>
            <person name="Flanigan M.J."/>
            <person name="Edwards N.J."/>
            <person name="Bolanos R."/>
            <person name="Fasulo D."/>
            <person name="Halldorsson B.V."/>
            <person name="Hannenhalli S."/>
            <person name="Turner R."/>
            <person name="Yooseph S."/>
            <person name="Lu F."/>
            <person name="Nusskern D.R."/>
            <person name="Shue B.C."/>
            <person name="Zheng X.H."/>
            <person name="Zhong F."/>
            <person name="Delcher A.L."/>
            <person name="Huson D.H."/>
            <person name="Kravitz S.A."/>
            <person name="Mouchard L."/>
            <person name="Reinert K."/>
            <person name="Remington K.A."/>
            <person name="Clark A.G."/>
            <person name="Waterman M.S."/>
            <person name="Eichler E.E."/>
            <person name="Adams M.D."/>
            <person name="Hunkapiller M.W."/>
            <person name="Myers E.W."/>
            <person name="Venter J.C."/>
        </authorList>
    </citation>
    <scope>NUCLEOTIDE SEQUENCE [LARGE SCALE GENOMIC DNA]</scope>
</reference>
<reference key="7">
    <citation type="journal article" date="2004" name="Genome Res.">
        <title>The status, quality, and expansion of the NIH full-length cDNA project: the Mammalian Gene Collection (MGC).</title>
        <authorList>
            <consortium name="The MGC Project Team"/>
        </authorList>
    </citation>
    <scope>NUCLEOTIDE SEQUENCE [LARGE SCALE MRNA]</scope>
    <source>
        <tissue>Skeletal muscle</tissue>
    </source>
</reference>
<reference key="8">
    <citation type="journal article" date="2000" name="Hum. Mol. Genet.">
        <title>Myotilin is mutated in limb girdle muscular dystrophy 1A.</title>
        <authorList>
            <person name="Hauser M.A."/>
            <person name="Horrigan S.K."/>
            <person name="Salmikangas P."/>
            <person name="Torian U.M."/>
            <person name="Viles K.D."/>
            <person name="Dancel R."/>
            <person name="Tim R.W."/>
            <person name="Taivainen A."/>
            <person name="Bartoloni L."/>
            <person name="Gilchrist J.M."/>
            <person name="Stajich J.M."/>
            <person name="Gaskell P.C."/>
            <person name="Gilbert J.R."/>
            <person name="Vance J.M."/>
            <person name="Pericak-Vance M.A."/>
            <person name="Carpen O."/>
            <person name="Westbrook C.A."/>
            <person name="Speer M.C."/>
        </authorList>
    </citation>
    <scope>INTERACTION WITH TTID</scope>
</reference>
<reference key="9">
    <citation type="journal article" date="2006" name="Cell. Mol. Life Sci.">
        <title>The ubiquitin-specific protease USP25 interacts with three sarcomeric proteins.</title>
        <authorList>
            <person name="Bosch-Comas A."/>
            <person name="Lindsten K."/>
            <person name="Gonzalez-Duarte R."/>
            <person name="Masucci M.G."/>
            <person name="Marfany G."/>
        </authorList>
    </citation>
    <scope>INTERACTION WITH USP25</scope>
</reference>
<reference key="10">
    <citation type="journal article" date="2008" name="Proc. Natl. Acad. Sci. U.S.A.">
        <title>Connecting actin monomers by iso-peptide bond is a toxicity mechanism of the Vibrio cholerae MARTX toxin.</title>
        <authorList>
            <person name="Kudryashov D.S."/>
            <person name="Durer Z.A."/>
            <person name="Ytterberg A.J."/>
            <person name="Sawaya M.R."/>
            <person name="Pashkov I."/>
            <person name="Prochazkova K."/>
            <person name="Yeates T.O."/>
            <person name="Loo R.R."/>
            <person name="Loo J.A."/>
            <person name="Satchell K.J."/>
            <person name="Reisler E."/>
        </authorList>
    </citation>
    <scope>CROSS-LINK BY V.CHOLERAE TOXIN RTXA (MICROBIAL INFECTION)</scope>
</reference>
<reference key="11">
    <citation type="journal article" date="2011" name="Mol. Cell. Proteomics">
        <title>The first identification of lysine malonylation substrates and its regulatory enzyme.</title>
        <authorList>
            <person name="Peng C."/>
            <person name="Lu Z."/>
            <person name="Xie Z."/>
            <person name="Cheng Z."/>
            <person name="Chen Y."/>
            <person name="Tan M."/>
            <person name="Luo H."/>
            <person name="Zhang Y."/>
            <person name="He W."/>
            <person name="Yang K."/>
            <person name="Zwaans B.M."/>
            <person name="Tishkoff D."/>
            <person name="Ho L."/>
            <person name="Lombard D."/>
            <person name="He T.C."/>
            <person name="Dai J."/>
            <person name="Verdin E."/>
            <person name="Ye Y."/>
            <person name="Zhao Y."/>
        </authorList>
    </citation>
    <scope>MALONYLATION AT LYS-63</scope>
</reference>
<reference key="12">
    <citation type="journal article" date="2013" name="Nat. Commun.">
        <title>ALKBH4-dependent demethylation of actin regulates actomyosin dynamics.</title>
        <authorList>
            <person name="Li M.M."/>
            <person name="Nilsen A."/>
            <person name="Shi Y."/>
            <person name="Fusser M."/>
            <person name="Ding Y.H."/>
            <person name="Fu Y."/>
            <person name="Liu B."/>
            <person name="Niu Y."/>
            <person name="Wu Y.S."/>
            <person name="Huang C.M."/>
            <person name="Olofsson M."/>
            <person name="Jin K.X."/>
            <person name="Lv Y."/>
            <person name="Xu X.Z."/>
            <person name="He C."/>
            <person name="Dong M.Q."/>
            <person name="Rendtlew Danielsen J.M."/>
            <person name="Klungland A."/>
            <person name="Yang Y.G."/>
        </authorList>
    </citation>
    <scope>METHYLATION AT LYS-86</scope>
    <scope>DEMETHYLATION BY ALKBH4</scope>
</reference>
<reference key="13">
    <citation type="journal article" date="2015" name="Science">
        <title>ACD toxin-produced actin oligomers poison formin-controlled actin polymerization.</title>
        <authorList>
            <person name="Heisler D.B."/>
            <person name="Kudryashova E."/>
            <person name="Grinevich D.O."/>
            <person name="Suarez C."/>
            <person name="Winkelman J.D."/>
            <person name="Birukov K.G."/>
            <person name="Kotha S.R."/>
            <person name="Parinandi N.L."/>
            <person name="Vavylonis D."/>
            <person name="Kovar D.R."/>
            <person name="Kudryashov D.S."/>
        </authorList>
    </citation>
    <scope>CROSS-LINK BY V.CHOLERAE TOXIN RTXA (MICROBIAL INFECTION)</scope>
</reference>
<reference key="14">
    <citation type="journal article" date="2019" name="Nature">
        <title>SETD3 is an actin histidine methyltransferase that prevents primary dystocia.</title>
        <authorList>
            <person name="Wilkinson A.W."/>
            <person name="Diep J."/>
            <person name="Dai S."/>
            <person name="Liu S."/>
            <person name="Ooi Y.S."/>
            <person name="Song D."/>
            <person name="Li T.M."/>
            <person name="Horton J.R."/>
            <person name="Zhang X."/>
            <person name="Liu C."/>
            <person name="Trivedi D.V."/>
            <person name="Ruppel K.M."/>
            <person name="Vilches-Moure J.G."/>
            <person name="Casey K.M."/>
            <person name="Mak J."/>
            <person name="Cowan T."/>
            <person name="Elias J.E."/>
            <person name="Nagamine C.M."/>
            <person name="Spudich J.A."/>
            <person name="Cheng X."/>
            <person name="Carette J.E."/>
            <person name="Gozani O."/>
        </authorList>
    </citation>
    <scope>METHYLATION AT HIS-75</scope>
</reference>
<reference key="15">
    <citation type="journal article" date="2001" name="Am. J. Hum. Genet.">
        <title>Nemaline myopathy caused by mutations in the muscle alpha-skeletal-actin gene.</title>
        <authorList>
            <person name="Ilkovski B."/>
            <person name="Cooper S.T."/>
            <person name="Nowak K."/>
            <person name="Ryan M.M."/>
            <person name="Yang N."/>
            <person name="Schnell C."/>
            <person name="Durling H.J."/>
            <person name="Roddick L.G."/>
            <person name="Wilkinson I."/>
            <person name="Kornberg A.J."/>
            <person name="Collins K.J."/>
            <person name="Wallace G."/>
            <person name="Gunning P."/>
            <person name="Hardeman E.C."/>
            <person name="Laing N.G."/>
            <person name="North K.N."/>
        </authorList>
    </citation>
    <scope>VARIANTS CMYO2A SER-117; MET-138; GLY-185; CYS-270 AND LEU-359</scope>
</reference>
<reference key="16">
    <citation type="journal article" date="2003" name="Neuromuscul. Disord.">
        <title>Muscle disease caused by mutations in the skeletal muscle alpha-actin gene (ACTA1).</title>
        <authorList>
            <person name="Sparrow J.C."/>
            <person name="Nowak K.J."/>
            <person name="Durling H.J."/>
            <person name="Beggs A.H."/>
            <person name="Wallgren-Pettersson C."/>
            <person name="Romero N."/>
            <person name="Nonaka I."/>
            <person name="Laing N.G."/>
        </authorList>
    </citation>
    <scope>REVIEW ON VARIANTS</scope>
    <scope>INVOLVEMENT IN CMYO2B</scope>
</reference>
<reference key="17">
    <citation type="journal article" date="2001" name="Neuromuscul. Disord.">
        <title>Mild phenotype of nemaline myopathy with sleep hypoventilation due to a mutation in the skeletal muscle alpha-actin (ACTA1) gene.</title>
        <authorList>
            <person name="Jungbluth H."/>
            <person name="Sewry C.A."/>
            <person name="Brown S.C."/>
            <person name="Nowak K.J."/>
            <person name="Laing N.G."/>
            <person name="Wallgren-Pettersson C."/>
            <person name="Pelin K."/>
            <person name="Manzur A.Y."/>
            <person name="Mercuri E."/>
            <person name="Dubowitz V."/>
            <person name="Muntoni F."/>
        </authorList>
    </citation>
    <scope>VARIANTS CMYO2A VAL-134 AND ARG-271</scope>
</reference>
<reference key="18">
    <citation type="journal article" date="2004" name="Ann. Neurol.">
        <title>Heterogeneity of nemaline myopathy cases with skeletal muscle alpha-actin gene mutations.</title>
        <authorList>
            <person name="Agrawal P.B."/>
            <person name="Strickland C.D."/>
            <person name="Midgett C."/>
            <person name="Morales A."/>
            <person name="Newburger D.E."/>
            <person name="Poulos M.A."/>
            <person name="Tomczak K.K."/>
            <person name="Ryan M.M."/>
            <person name="Iannaccone S.T."/>
            <person name="Crawford T.O."/>
            <person name="Laing N.G."/>
            <person name="Beggs A.H."/>
        </authorList>
    </citation>
    <scope>VARIANTS CMYO2A LEU-37; LEU-40; TYR-42; ARG-43; ASN-66; LEU-75; ARG-75; LEU-77; ALA-79; LYS-85; ALA-136; ASP-148; GLY-181; ASP-184; GLY-185; SER-199; GLY-226; VAL-229; ILE-229; ARG-248; ASP-253; CYS-270; HIS-281; LYS-282; GLY-288 AND GLN-375</scope>
</reference>
<reference key="19">
    <citation type="journal article" date="2004" name="Ann. Neurol.">
        <title>Actin mutations are one cause of congenital fibre type disproportion.</title>
        <authorList>
            <person name="Laing N.G."/>
            <person name="Clarke N.F."/>
            <person name="Dye D.E."/>
            <person name="Liyanage K."/>
            <person name="Walker K.R."/>
            <person name="Kobayashi Y."/>
            <person name="Shimakawa S."/>
            <person name="Hagiwara T."/>
            <person name="Ouvrier R."/>
            <person name="Sparrow J.C."/>
            <person name="Nishino I."/>
            <person name="North K.N."/>
            <person name="Nonaka I."/>
        </authorList>
    </citation>
    <scope>VARIANTS CMYO2C PRO-223; VAL-294 AND SER-334</scope>
</reference>
<reference key="20">
    <citation type="journal article" date="2004" name="Hum. Mol. Genet.">
        <title>Evidence for a dominant-negative effect in ACTA1 nemaline myopathy caused by abnormal folding, aggregation and altered polymerization of mutant actin isoforms.</title>
        <authorList>
            <person name="Ilkovski B."/>
            <person name="Nowak K.J."/>
            <person name="Domazetovska A."/>
            <person name="Maxwell A.L."/>
            <person name="Clement S."/>
            <person name="Davies K.E."/>
            <person name="Laing N.G."/>
            <person name="North K.N."/>
            <person name="Cooper S.T."/>
        </authorList>
    </citation>
    <scope>VARIANTS CMYO2A ILE-68; LYS-74; SER-117; MET-138; LEU-165; MET-165; GLY-185; CYS-270 AND LEU-359</scope>
</reference>
<reference key="21">
    <citation type="journal article" date="2004" name="J. Med. Genet.">
        <title>Missense mutations of ACTA1 cause dominant congenital myopathy with cores.</title>
        <authorList>
            <person name="Kaindl A.M."/>
            <person name="Rueschendorf F."/>
            <person name="Krause S."/>
            <person name="Goebel H.-H."/>
            <person name="Koehler K."/>
            <person name="Becker C."/>
            <person name="Pongratz D."/>
            <person name="Mueller-Hoecker J."/>
            <person name="Nuernberg P."/>
            <person name="Stoltenburg-Didinger G."/>
            <person name="Lochmueller H."/>
            <person name="Huebner A."/>
        </authorList>
    </citation>
    <scope>VARIANTS CMYO2A TYR-3 AND ALA-336</scope>
</reference>
<reference key="22">
    <citation type="journal article" date="2004" name="Neuromuscul. Disord.">
        <title>Follow-up of nemaline myopathy in two patients with novel mutations in the skeletal muscle alpha-actin gene (ACTA1).</title>
        <authorList>
            <person name="Ohlsson M."/>
            <person name="Tajsharghi H."/>
            <person name="Darin N."/>
            <person name="Kyllerman M."/>
            <person name="Oldfors A."/>
        </authorList>
    </citation>
    <scope>VARIANTS CMYO2A ASP-270 AND GLU-375</scope>
</reference>
<reference key="23">
    <citation type="journal article" date="2006" name="Neuromuscul. Disord.">
        <title>Autosomal dominant nemaline myopathy with intranuclear rods due to mutation of the skeletal muscle ACTA1 gene: clinical and pathological variability within a kindred.</title>
        <authorList>
            <person name="Hutchinson D.O."/>
            <person name="Charlton A."/>
            <person name="Laing N.G."/>
            <person name="Ilkovski B."/>
            <person name="North K.N."/>
        </authorList>
    </citation>
    <scope>VARIANT CMYO2A MET-165</scope>
</reference>
<reference key="24">
    <citation type="journal article" date="2006" name="Neuromuscul. Disord.">
        <title>Fatal hypertrophic cardiomyopathy and nemaline myopathy associated with ACTA1 K336E mutation.</title>
        <authorList>
            <person name="D'Amico A."/>
            <person name="Graziano C."/>
            <person name="Pacileo G."/>
            <person name="Petrini S."/>
            <person name="Nowak K.J."/>
            <person name="Boldrini R."/>
            <person name="Jacques A."/>
            <person name="Feng J.-J."/>
            <person name="Porfirio B."/>
            <person name="Sewry C.A."/>
            <person name="Santorelli F.M."/>
            <person name="Limongelli G."/>
            <person name="Bertini E."/>
            <person name="Laing N."/>
            <person name="Marston S.B."/>
        </authorList>
    </citation>
    <scope>VARIANT CMYO2A GLU-338</scope>
</reference>
<reference key="25">
    <citation type="journal article" date="2007" name="Ann. Neurol.">
        <title>The pathogenesis of ACTA1-related congenital fiber type disproportion.</title>
        <authorList>
            <person name="Clarke N.F."/>
            <person name="Ilkovski B."/>
            <person name="Cooper S."/>
            <person name="Valova V.A."/>
            <person name="Robinson P.J."/>
            <person name="Nonaka I."/>
            <person name="Feng J.-J."/>
            <person name="Marston S."/>
            <person name="North K."/>
        </authorList>
    </citation>
    <scope>CHARACTERIZATION OF VARIANT CMYO2C VAL-294</scope>
</reference>
<reference key="26">
    <citation type="journal article" date="2007" name="Ann. Neurol.">
        <title>Intranuclear rod myopathy: molecular pathogenesis and mechanisms of weakness.</title>
        <authorList>
            <person name="Domazetovska A."/>
            <person name="Ilkovski B."/>
            <person name="Kumar V."/>
            <person name="Valova V.A."/>
            <person name="Vandebrouck A."/>
            <person name="Hutchinson D.O."/>
            <person name="Robinson P.J."/>
            <person name="Cooper S.T."/>
            <person name="Sparrow J.C."/>
            <person name="Peckham M."/>
            <person name="North K.N."/>
        </authorList>
    </citation>
    <scope>CHARACTERIZATION OF VARIANT CMYO2A MET-165</scope>
</reference>
<reference key="27">
    <citation type="journal article" date="2012" name="Neurology">
        <title>Nemaline myopathy with stiffness and hypertonia associated with an ACTA1 mutation.</title>
        <authorList>
            <person name="Jain R.K."/>
            <person name="Jayawant S."/>
            <person name="Squier W."/>
            <person name="Muntoni F."/>
            <person name="Sewry C.A."/>
            <person name="Manzur A."/>
            <person name="Quinlivan R."/>
            <person name="Lillis S."/>
            <person name="Jungbluth H."/>
            <person name="Sparrow J.C."/>
            <person name="Ravenscroft G."/>
            <person name="Nowak K.J."/>
            <person name="Memo M."/>
            <person name="Marston S.B."/>
            <person name="Laing N.G."/>
        </authorList>
    </citation>
    <scope>VARIANT CMYO2A ASN-328</scope>
    <scope>CHARACTERIZATION OF VARIANT CMYO2A ASN-328</scope>
</reference>
<reference key="28">
    <citation type="journal article" date="2013" name="Pediatrics">
        <title>Nemaline myopathy with dilated cardiomyopathy in childhood.</title>
        <authorList>
            <person name="Gatayama R."/>
            <person name="Ueno K."/>
            <person name="Nakamura H."/>
            <person name="Yanagi S."/>
            <person name="Ueda H."/>
            <person name="Yamagishi H."/>
            <person name="Yasui S."/>
        </authorList>
    </citation>
    <scope>VARIANT CMYO2A CYS-358</scope>
</reference>
<reference key="29">
    <citation type="journal article" date="2015" name="JAMA Neurol.">
        <title>Association of a Novel ACTA1 Mutation With a Dominant Progressive Scapuloperoneal Myopathy in an Extended Family.</title>
        <authorList>
            <person name="Zukosky K."/>
            <person name="Meilleur K."/>
            <person name="Traynor B.J."/>
            <person name="Dastgir J."/>
            <person name="Medne L."/>
            <person name="Devoto M."/>
            <person name="Collins J."/>
            <person name="Rooney J."/>
            <person name="Zou Y."/>
            <person name="Yang M.L."/>
            <person name="Gibbs J.R."/>
            <person name="Meier M."/>
            <person name="Stetefeld J."/>
            <person name="Finkel R.S."/>
            <person name="Schessl J."/>
            <person name="Elman L."/>
            <person name="Felice K."/>
            <person name="Ferguson T.A."/>
            <person name="Ceyhan-Birsoy O."/>
            <person name="Beggs A.H."/>
            <person name="Tennekoon G."/>
            <person name="Johnson J.O."/>
            <person name="Boennemann C.G."/>
        </authorList>
    </citation>
    <scope>INVOLVEMENT IN SHPM</scope>
    <scope>VARIANT SHPM ASP-197</scope>
    <scope>CHARACTERIZATION OF VARIANT SHPM ASP-197</scope>
    <scope>CHARACTERIZATION OF VARIANT CMYO2A GLY-288</scope>
</reference>
<reference key="30">
    <citation type="journal article" date="2015" name="J. Med. Genet.">
        <title>Utility of next generation sequencing in genetic diagnosis of early onset neuromuscular disorders.</title>
        <authorList>
            <person name="Chae J.H."/>
            <person name="Vasta V."/>
            <person name="Cho A."/>
            <person name="Lim B.C."/>
            <person name="Zhang Q."/>
            <person name="Eun S.H."/>
            <person name="Hahn S.H."/>
        </authorList>
    </citation>
    <scope>VARIANTS CMYO2A ARG-72 AND VAL-116</scope>
</reference>
<reference key="31">
    <citation type="journal article" date="2018" name="Am. J. Med. Genet. A">
        <title>Arthrogryposis and pterygia as lethal end manifestations of genetically defined congenital myopathies.</title>
        <authorList>
            <person name="Ahmed A.A."/>
            <person name="Skaria P."/>
            <person name="Safina N.P."/>
            <person name="Thiffault I."/>
            <person name="Kats A."/>
            <person name="Taboada E."/>
            <person name="Habeebu S."/>
            <person name="Saunders C."/>
        </authorList>
    </citation>
    <scope>VARIANT CMYO2A SER-17</scope>
</reference>
<gene>
    <name type="primary">ACTA1</name>
    <name type="synonym">ACTA</name>
</gene>
<keyword id="KW-0002">3D-structure</keyword>
<keyword id="KW-0007">Acetylation</keyword>
<keyword id="KW-0067">ATP-binding</keyword>
<keyword id="KW-0963">Cytoplasm</keyword>
<keyword id="KW-0206">Cytoskeleton</keyword>
<keyword id="KW-0225">Disease variant</keyword>
<keyword id="KW-0378">Hydrolase</keyword>
<keyword id="KW-1017">Isopeptide bond</keyword>
<keyword id="KW-0488">Methylation</keyword>
<keyword id="KW-0514">Muscle protein</keyword>
<keyword id="KW-1057">Nemaline myopathy</keyword>
<keyword id="KW-0547">Nucleotide-binding</keyword>
<keyword id="KW-0558">Oxidation</keyword>
<keyword id="KW-1267">Proteomics identification</keyword>
<keyword id="KW-1185">Reference proteome</keyword>
<evidence type="ECO:0000250" key="1">
    <source>
        <dbReference type="UniProtKB" id="P60709"/>
    </source>
</evidence>
<evidence type="ECO:0000250" key="2">
    <source>
        <dbReference type="UniProtKB" id="P62737"/>
    </source>
</evidence>
<evidence type="ECO:0000250" key="3">
    <source>
        <dbReference type="UniProtKB" id="P68134"/>
    </source>
</evidence>
<evidence type="ECO:0000250" key="4">
    <source>
        <dbReference type="UniProtKB" id="P68135"/>
    </source>
</evidence>
<evidence type="ECO:0000250" key="5">
    <source>
        <dbReference type="UniProtKB" id="P68137"/>
    </source>
</evidence>
<evidence type="ECO:0000269" key="6">
    <source>
    </source>
</evidence>
<evidence type="ECO:0000269" key="7">
    <source>
    </source>
</evidence>
<evidence type="ECO:0000269" key="8">
    <source>
    </source>
</evidence>
<evidence type="ECO:0000269" key="9">
    <source>
    </source>
</evidence>
<evidence type="ECO:0000269" key="10">
    <source>
    </source>
</evidence>
<evidence type="ECO:0000269" key="11">
    <source>
    </source>
</evidence>
<evidence type="ECO:0000269" key="12">
    <source>
    </source>
</evidence>
<evidence type="ECO:0000269" key="13">
    <source>
    </source>
</evidence>
<evidence type="ECO:0000269" key="14">
    <source>
    </source>
</evidence>
<evidence type="ECO:0000269" key="15">
    <source>
    </source>
</evidence>
<evidence type="ECO:0000269" key="16">
    <source>
    </source>
</evidence>
<evidence type="ECO:0000269" key="17">
    <source>
    </source>
</evidence>
<evidence type="ECO:0000269" key="18">
    <source>
    </source>
</evidence>
<evidence type="ECO:0000269" key="19">
    <source>
    </source>
</evidence>
<evidence type="ECO:0000269" key="20">
    <source>
    </source>
</evidence>
<evidence type="ECO:0000269" key="21">
    <source>
    </source>
</evidence>
<evidence type="ECO:0000269" key="22">
    <source>
    </source>
</evidence>
<evidence type="ECO:0000269" key="23">
    <source>
    </source>
</evidence>
<evidence type="ECO:0000269" key="24">
    <source>
    </source>
</evidence>
<evidence type="ECO:0000269" key="25">
    <source>
    </source>
</evidence>
<evidence type="ECO:0000269" key="26">
    <source>
    </source>
</evidence>
<evidence type="ECO:0000269" key="27">
    <source>
    </source>
</evidence>
<evidence type="ECO:0000269" key="28">
    <source>
    </source>
</evidence>
<evidence type="ECO:0000305" key="29"/>
<evidence type="ECO:0000305" key="30">
    <source>
    </source>
</evidence>
<evidence type="ECO:0000305" key="31">
    <source>
    </source>
</evidence>
<evidence type="ECO:0007829" key="32">
    <source>
        <dbReference type="PDB" id="7RNS"/>
    </source>
</evidence>
<evidence type="ECO:0007829" key="33">
    <source>
        <dbReference type="PDB" id="9DUU"/>
    </source>
</evidence>
<evidence type="ECO:0007829" key="34">
    <source>
        <dbReference type="PDB" id="9DUV"/>
    </source>
</evidence>
<sequence>MCDEDETTALVCDNGSGLVKAGFAGDDAPRAVFPSIVGRPRHQGVMVGMGQKDSYVGDEAQSKRGILTLKYPIEHGIITNWDDMEKIWHHTFYNELRVAPEEHPTLLTEAPLNPKANREKMTQIMFETFNVPAMYVAIQAVLSLYASGRTTGIVLDSGDGVTHNVPIYEGYALPHAIMRLDLAGRDLTDYLMKILTERGYSFVTTAEREIVRDIKEKLCYVALDFENEMATAASSSSLEKSYELPDGQVITIGNERFRCPETLFQPSFIGMESAGIHETTYNSIMKCDIDIRKDLYANNVMSGGTTMYPGIADRMQKEITALAPSTMKIKIIAPPERKYSVWIGGSILASLSTFQQMWITKQEYDEAGPSIVHRKCF</sequence>
<protein>
    <recommendedName>
        <fullName>Actin, alpha skeletal muscle</fullName>
        <ecNumber evidence="5">3.6.4.-</ecNumber>
    </recommendedName>
    <alternativeName>
        <fullName>Alpha-actin-1</fullName>
    </alternativeName>
    <component>
        <recommendedName>
            <fullName>Actin, alpha skeletal muscle, intermediate form</fullName>
        </recommendedName>
    </component>
</protein>
<name>ACTS_HUMAN</name>
<comment type="function">
    <text>Actins are highly conserved proteins that are involved in various types of cell motility and are ubiquitously expressed in all eukaryotic cells.</text>
</comment>
<comment type="catalytic activity">
    <reaction evidence="5">
        <text>ATP + H2O = ADP + phosphate + H(+)</text>
        <dbReference type="Rhea" id="RHEA:13065"/>
        <dbReference type="ChEBI" id="CHEBI:15377"/>
        <dbReference type="ChEBI" id="CHEBI:15378"/>
        <dbReference type="ChEBI" id="CHEBI:30616"/>
        <dbReference type="ChEBI" id="CHEBI:43474"/>
        <dbReference type="ChEBI" id="CHEBI:456216"/>
    </reaction>
</comment>
<comment type="subunit">
    <text evidence="4 7 17">Polymerization of globular actin (G-actin) leads to a structural filament (F-actin) in the form of a two-stranded helix. Each actin can bind to 4 others. Interacts with alpha-actinin (By similarity). Identified in a complex composed of ACTA1, COBL, GSN AND TMSB4X (By similarity). Interacts with TTID (PubMed:10958653). Interacts (via its C-terminus) with USP25; the interaction occurs for all USP25 isoforms but is strongest for isoform USP25m in muscle differentiating cells (PubMed:16501887).</text>
</comment>
<comment type="interaction">
    <interactant intactId="EBI-367510">
        <id>P68133</id>
    </interactant>
    <interactant intactId="EBI-2556915">
        <id>P13928</id>
        <label>ANXA8</label>
    </interactant>
    <organismsDiffer>false</organismsDiffer>
    <experiments>2</experiments>
</comment>
<comment type="interaction">
    <interactant intactId="EBI-367510">
        <id>P68133</id>
    </interactant>
    <interactant intactId="EBI-10254793">
        <id>Q6XD76</id>
        <label>ASCL4</label>
    </interactant>
    <organismsDiffer>false</organismsDiffer>
    <experiments>3</experiments>
</comment>
<comment type="interaction">
    <interactant intactId="EBI-367510">
        <id>P68133</id>
    </interactant>
    <interactant intactId="EBI-1383687">
        <id>Q9UQM7</id>
        <label>CAMK2A</label>
    </interactant>
    <organismsDiffer>false</organismsDiffer>
    <experiments>3</experiments>
</comment>
<comment type="interaction">
    <interactant intactId="EBI-367510">
        <id>P68133</id>
    </interactant>
    <interactant intactId="EBI-6509505">
        <id>Q0VD86</id>
        <label>INCA1</label>
    </interactant>
    <organismsDiffer>false</organismsDiffer>
    <experiments>3</experiments>
</comment>
<comment type="interaction">
    <interactant intactId="EBI-367510">
        <id>P68133</id>
    </interactant>
    <interactant intactId="EBI-25830459">
        <id>Q6ZQX7-4</id>
        <label>LIAT1</label>
    </interactant>
    <organismsDiffer>false</organismsDiffer>
    <experiments>3</experiments>
</comment>
<comment type="interaction">
    <interactant intactId="EBI-367510">
        <id>P68133</id>
    </interactant>
    <interactant intactId="EBI-10171633">
        <id>Q96PV4</id>
        <label>PNMA5</label>
    </interactant>
    <organismsDiffer>false</organismsDiffer>
    <experiments>3</experiments>
</comment>
<comment type="interaction">
    <interactant intactId="EBI-367510">
        <id>P68133</id>
    </interactant>
    <interactant intactId="EBI-11285923">
        <id>Q9H7C4</id>
        <label>SYNC</label>
    </interactant>
    <organismsDiffer>false</organismsDiffer>
    <experiments>3</experiments>
</comment>
<comment type="interaction">
    <interactant intactId="EBI-367510">
        <id>P68133</id>
    </interactant>
    <interactant intactId="EBI-717634">
        <id>P17024</id>
        <label>ZNF20</label>
    </interactant>
    <organismsDiffer>false</organismsDiffer>
    <experiments>3</experiments>
</comment>
<comment type="subcellular location">
    <subcellularLocation>
        <location>Cytoplasm</location>
        <location>Cytoskeleton</location>
    </subcellularLocation>
</comment>
<comment type="PTM">
    <text evidence="3">Oxidation of Met-46 and Met-49 by MICALs (MICAL1, MICAL2 or MICAL3) to form methionine sulfoxide promotes actin filament depolymerization. MICAL1 and MICAL2 produce the (R)-S-oxide form. The (R)-S-oxide form is reverted by MSRB1 and MSRB2, which promotes actin repolymerization.</text>
</comment>
<comment type="PTM">
    <text evidence="24">Monomethylation at Lys-86 (K84me1) regulates actin-myosin interaction and actomyosin-dependent processes. Demethylation by ALKBH4 is required for maintaining actomyosin dynamics supporting normal cleavage furrow ingression during cytokinesis and cell migration.</text>
</comment>
<comment type="PTM">
    <molecule>Actin, alpha skeletal muscle, intermediate form</molecule>
    <text evidence="3">N-terminal cleavage of acetylated cysteine of intermediate muscle actin by ACTMAP.</text>
</comment>
<comment type="PTM">
    <text evidence="28">Methylated at His-75 by SETD3.</text>
</comment>
<comment type="PTM">
    <text evidence="30 31">(Microbial infection) Monomeric actin is cross-linked by V.cholerae toxins RtxA and VgrG1 in case of infection: bacterial toxins mediate the cross-link between Lys-52 of one monomer and Glu-272 of another actin monomer, resulting in formation of highly toxic actin oligomers that cause cell rounding (PubMed:19015515). The toxin can be highly efficient at very low concentrations by acting on formin homology family proteins: toxic actin oligomers bind with high affinity to formins and adversely affect both nucleation and elongation abilities of formins, causing their potent inhibition in both profilin-dependent and independent manners (PubMed:26228148).</text>
</comment>
<comment type="disease" evidence="6 8 9 11 12 13 15 16 18 20 22 23 25 26 27">
    <disease id="DI-02034">
        <name>Congenital myopathy 2A, typical, autosomal dominant</name>
        <acronym>CMYO2A</acronym>
        <description>A muscular disorder characterized by generalized muscle weakness, delayed motor milestones, hypotonia, and muscle fiber abnormalities on histologic examination. Histologic findings include abnormal thread- or rod-like structures (nemaline rods), intranuclear rods, clumped filaments, cores, or fiber-type disproportion. The spectrum of clinical phenotypes ranges from severe neonatal presentations to onset of a milder disorder in childhood.</description>
        <dbReference type="MIM" id="161800"/>
    </disease>
    <text>The disease is caused by variants affecting the gene represented in this entry.</text>
</comment>
<comment type="disease" evidence="6 10">
    <disease id="DI-06621">
        <name>Congenital myopathy 2B, severe infantile, autosomal recessive</name>
        <acronym>CMYO2B</acronym>
        <description>An autosomal recessive skeletal muscle disorder characterized by severe hypotonia with lack of spontaneous movements and respiratory insufficiency, usually leading to death in infancy or early childhood. Longer survival has been reported.</description>
        <dbReference type="MIM" id="620265"/>
    </disease>
    <text>The disease is caused by variants affecting the gene represented in this entry.</text>
</comment>
<comment type="disease" evidence="14 19">
    <disease id="DI-06622">
        <name>Congenital myopathy 2C, severe infantile, autosomal dominant</name>
        <acronym>CMYO2C</acronym>
        <description>An autosomal dominant skeletal muscle disorder characterized by severe congenital weakness usually resulting in death from respiratory failure in the first year or so of life. Patients present at birth with hypotonia, lack of antigravity movements, poor head control, and difficulties feeding or breathing, often requiring tube-feeding and mechanical ventilation. Decreased fetal movements may be observed in some cases.</description>
        <dbReference type="MIM" id="620278"/>
    </disease>
    <text>The disease is caused by variants affecting the gene represented in this entry.</text>
</comment>
<comment type="disease" evidence="26">
    <disease id="DI-04672">
        <name>Myopathy, scapulohumeroperoneal</name>
        <acronym>SHPM</acronym>
        <description>An autosomal dominant muscular disorder characterized by progressive muscle weakness with initial scapulo-humeral-peroneal and distal distribution. Over time, muscle weakness progresses to proximal muscle groups. Clinical characteristics include scapular winging, mild lower facial weakness, foot drop due to foot eversion and dorsiflexion weakness, and selective muscle atrophy. Age at onset and disease progression are variable.</description>
        <dbReference type="MIM" id="616852"/>
    </disease>
    <text>The disease is caused by variants affecting the gene represented in this entry.</text>
</comment>
<comment type="miscellaneous">
    <text>In vertebrates 3 main groups of actin isoforms, alpha, beta and gamma have been identified. The alpha actins are found in muscle tissues and are a major constituent of the contractile apparatus. The beta and gamma actins coexist in most cell types as components of the cytoskeleton and as mediators of internal cell motility.</text>
</comment>
<comment type="similarity">
    <text evidence="29">Belongs to the actin family.</text>
</comment>
<organism>
    <name type="scientific">Homo sapiens</name>
    <name type="common">Human</name>
    <dbReference type="NCBI Taxonomy" id="9606"/>
    <lineage>
        <taxon>Eukaryota</taxon>
        <taxon>Metazoa</taxon>
        <taxon>Chordata</taxon>
        <taxon>Craniata</taxon>
        <taxon>Vertebrata</taxon>
        <taxon>Euteleostomi</taxon>
        <taxon>Mammalia</taxon>
        <taxon>Eutheria</taxon>
        <taxon>Euarchontoglires</taxon>
        <taxon>Primates</taxon>
        <taxon>Haplorrhini</taxon>
        <taxon>Catarrhini</taxon>
        <taxon>Hominidae</taxon>
        <taxon>Homo</taxon>
    </lineage>
</organism>